<protein>
    <recommendedName>
        <fullName>Probable quinate permease</fullName>
    </recommendedName>
    <alternativeName>
        <fullName>Quinate transporter</fullName>
    </alternativeName>
</protein>
<sequence>MSILALVEDRPTPKEVYNWKIYLLAAVASFTSCMIGYDSAFIGTTLALSSFREEFGFSTMSKTAVNLVSANIVSCYQAGAFFGAFFAYPIGHFWGRKWGLLFAGTIFTLGAGLMLGANGDRGLGLLYGGRVLAGLGVGAGSNITPIYISEMAPPSIRGRLVGVYELGWQIGGLVGFWINYGVSETLAPSHKQWIIPFAVQLIPSGLLLIGAVFLKESPRWLFSRGRREDAIKNLCWIRQLPADHIYMIEEIGAVDQALEEQRTTIGLGFWKPFKAAGTNKKVMYRLFLGSMLFFWQNGSGINAINYYSPTVFKSIGLHGANTSMFSTGIFGVVKTVVTFVWLLYLIDRLGRRLLLLIGAAGAAVCLLIVGAYIKIADPASNPTQEMTGGGIAAMFFFYLYTVFYTPSWNGTPWVMNSEMFEPNMRSLAQACAAASNWLWNFLISRFTPQMFAKMEYGVWFFFASLMLLSIVFVFFLVPETKGIPLESMDVLFESKPIWRAHATVLAKLREDEEQFRHDIEESGYSKTGEQQVEHVSEDLPKV</sequence>
<keyword id="KW-1003">Cell membrane</keyword>
<keyword id="KW-0472">Membrane</keyword>
<keyword id="KW-0672">Quinate metabolism</keyword>
<keyword id="KW-0812">Transmembrane</keyword>
<keyword id="KW-1133">Transmembrane helix</keyword>
<keyword id="KW-0813">Transport</keyword>
<keyword id="KW-0832">Ubl conjugation</keyword>
<gene>
    <name type="primary">qutD</name>
    <name type="ORF">AFUB_011020</name>
</gene>
<comment type="function">
    <text evidence="1">Integral membrane transporter that imports quinic acid to be catabolized as a carbon source.</text>
</comment>
<comment type="subunit">
    <text evidence="1">Interacts with creB.</text>
</comment>
<comment type="subcellular location">
    <subcellularLocation>
        <location>Cell membrane</location>
        <topology>Multi-pass membrane protein</topology>
    </subcellularLocation>
    <subcellularLocation>
        <location evidence="4">Cell membrane</location>
    </subcellularLocation>
</comment>
<comment type="PTM">
    <text>Ubiquitinated. Deubiquitinated by creB, probably to control its activity or amount.</text>
</comment>
<comment type="similarity">
    <text evidence="4">Belongs to the major facilitator superfamily. Sugar transporter (TC 2.A.1.1) family.</text>
</comment>
<accession>B0XQS8</accession>
<evidence type="ECO:0000250" key="1"/>
<evidence type="ECO:0000255" key="2"/>
<evidence type="ECO:0000256" key="3">
    <source>
        <dbReference type="SAM" id="MobiDB-lite"/>
    </source>
</evidence>
<evidence type="ECO:0000305" key="4"/>
<feature type="chain" id="PRO_0000395713" description="Probable quinate permease">
    <location>
        <begin position="1"/>
        <end position="542"/>
    </location>
</feature>
<feature type="topological domain" description="Cytoplasmic" evidence="2">
    <location>
        <begin position="1"/>
        <end position="22"/>
    </location>
</feature>
<feature type="transmembrane region" description="Helical" evidence="2">
    <location>
        <begin position="23"/>
        <end position="43"/>
    </location>
</feature>
<feature type="topological domain" description="Extracellular" evidence="2">
    <location>
        <begin position="44"/>
        <end position="74"/>
    </location>
</feature>
<feature type="transmembrane region" description="Helical" evidence="2">
    <location>
        <begin position="75"/>
        <end position="95"/>
    </location>
</feature>
<feature type="topological domain" description="Cytoplasmic" evidence="2">
    <location>
        <begin position="96"/>
        <end position="97"/>
    </location>
</feature>
<feature type="transmembrane region" description="Helical" evidence="2">
    <location>
        <begin position="98"/>
        <end position="118"/>
    </location>
</feature>
<feature type="topological domain" description="Extracellular" evidence="2">
    <location>
        <begin position="119"/>
        <end position="130"/>
    </location>
</feature>
<feature type="transmembrane region" description="Helical" evidence="2">
    <location>
        <begin position="131"/>
        <end position="151"/>
    </location>
</feature>
<feature type="topological domain" description="Cytoplasmic" evidence="2">
    <location>
        <begin position="152"/>
        <end position="159"/>
    </location>
</feature>
<feature type="transmembrane region" description="Helical" evidence="2">
    <location>
        <begin position="160"/>
        <end position="180"/>
    </location>
</feature>
<feature type="topological domain" description="Extracellular" evidence="2">
    <location>
        <begin position="181"/>
        <end position="193"/>
    </location>
</feature>
<feature type="transmembrane region" description="Helical" evidence="2">
    <location>
        <begin position="194"/>
        <end position="214"/>
    </location>
</feature>
<feature type="topological domain" description="Cytoplasmic" evidence="2">
    <location>
        <begin position="215"/>
        <end position="285"/>
    </location>
</feature>
<feature type="transmembrane region" description="Helical" evidence="2">
    <location>
        <begin position="286"/>
        <end position="306"/>
    </location>
</feature>
<feature type="topological domain" description="Extracellular" evidence="2">
    <location>
        <begin position="307"/>
        <end position="325"/>
    </location>
</feature>
<feature type="transmembrane region" description="Helical" evidence="2">
    <location>
        <begin position="326"/>
        <end position="346"/>
    </location>
</feature>
<feature type="topological domain" description="Cytoplasmic" evidence="2">
    <location>
        <begin position="347"/>
        <end position="352"/>
    </location>
</feature>
<feature type="transmembrane region" description="Helical" evidence="2">
    <location>
        <begin position="353"/>
        <end position="373"/>
    </location>
</feature>
<feature type="topological domain" description="Extracellular" evidence="2">
    <location>
        <begin position="374"/>
        <end position="387"/>
    </location>
</feature>
<feature type="transmembrane region" description="Helical" evidence="2">
    <location>
        <begin position="388"/>
        <end position="408"/>
    </location>
</feature>
<feature type="topological domain" description="Cytoplasmic" evidence="2">
    <location>
        <begin position="409"/>
        <end position="456"/>
    </location>
</feature>
<feature type="transmembrane region" description="Helical" evidence="2">
    <location>
        <begin position="457"/>
        <end position="477"/>
    </location>
</feature>
<feature type="topological domain" description="Extracellular" evidence="2">
    <location>
        <begin position="478"/>
        <end position="542"/>
    </location>
</feature>
<feature type="region of interest" description="Disordered" evidence="3">
    <location>
        <begin position="523"/>
        <end position="542"/>
    </location>
</feature>
<feature type="compositionally biased region" description="Basic and acidic residues" evidence="3">
    <location>
        <begin position="531"/>
        <end position="542"/>
    </location>
</feature>
<dbReference type="EMBL" id="DS499594">
    <property type="protein sequence ID" value="EDP56392.1"/>
    <property type="molecule type" value="Genomic_DNA"/>
</dbReference>
<dbReference type="SMR" id="B0XQS8"/>
<dbReference type="EnsemblFungi" id="EDP56392">
    <property type="protein sequence ID" value="EDP56392"/>
    <property type="gene ID" value="AFUB_011020"/>
</dbReference>
<dbReference type="VEuPathDB" id="FungiDB:AFUB_011020"/>
<dbReference type="HOGENOM" id="CLU_001265_30_12_1"/>
<dbReference type="OrthoDB" id="16600at5052"/>
<dbReference type="PhylomeDB" id="B0XQS8"/>
<dbReference type="Proteomes" id="UP000001699">
    <property type="component" value="Unassembled WGS sequence"/>
</dbReference>
<dbReference type="GO" id="GO:0005886">
    <property type="term" value="C:plasma membrane"/>
    <property type="evidence" value="ECO:0007669"/>
    <property type="project" value="UniProtKB-SubCell"/>
</dbReference>
<dbReference type="GO" id="GO:0005351">
    <property type="term" value="F:carbohydrate:proton symporter activity"/>
    <property type="evidence" value="ECO:0007669"/>
    <property type="project" value="TreeGrafter"/>
</dbReference>
<dbReference type="GO" id="GO:0019630">
    <property type="term" value="P:quinate metabolic process"/>
    <property type="evidence" value="ECO:0007669"/>
    <property type="project" value="UniProtKB-KW"/>
</dbReference>
<dbReference type="FunFam" id="1.20.1250.20:FF:000026">
    <property type="entry name" value="MFS quinate transporter QutD"/>
    <property type="match status" value="1"/>
</dbReference>
<dbReference type="Gene3D" id="1.20.1250.20">
    <property type="entry name" value="MFS general substrate transporter like domains"/>
    <property type="match status" value="1"/>
</dbReference>
<dbReference type="InterPro" id="IPR020846">
    <property type="entry name" value="MFS_dom"/>
</dbReference>
<dbReference type="InterPro" id="IPR005828">
    <property type="entry name" value="MFS_sugar_transport-like"/>
</dbReference>
<dbReference type="InterPro" id="IPR050360">
    <property type="entry name" value="MFS_Sugar_Transporters"/>
</dbReference>
<dbReference type="InterPro" id="IPR036259">
    <property type="entry name" value="MFS_trans_sf"/>
</dbReference>
<dbReference type="InterPro" id="IPR003663">
    <property type="entry name" value="Sugar/inositol_transpt"/>
</dbReference>
<dbReference type="InterPro" id="IPR005829">
    <property type="entry name" value="Sugar_transporter_CS"/>
</dbReference>
<dbReference type="NCBIfam" id="TIGR00879">
    <property type="entry name" value="SP"/>
    <property type="match status" value="1"/>
</dbReference>
<dbReference type="PANTHER" id="PTHR48022:SF34">
    <property type="entry name" value="MAJOR FACILITATOR SUPERFAMILY (MFS) PROFILE DOMAIN-CONTAINING PROTEIN-RELATED"/>
    <property type="match status" value="1"/>
</dbReference>
<dbReference type="PANTHER" id="PTHR48022">
    <property type="entry name" value="PLASTIDIC GLUCOSE TRANSPORTER 4"/>
    <property type="match status" value="1"/>
</dbReference>
<dbReference type="Pfam" id="PF00083">
    <property type="entry name" value="Sugar_tr"/>
    <property type="match status" value="1"/>
</dbReference>
<dbReference type="PRINTS" id="PR00171">
    <property type="entry name" value="SUGRTRNSPORT"/>
</dbReference>
<dbReference type="SUPFAM" id="SSF103473">
    <property type="entry name" value="MFS general substrate transporter"/>
    <property type="match status" value="1"/>
</dbReference>
<dbReference type="PROSITE" id="PS50850">
    <property type="entry name" value="MFS"/>
    <property type="match status" value="1"/>
</dbReference>
<dbReference type="PROSITE" id="PS00216">
    <property type="entry name" value="SUGAR_TRANSPORT_1"/>
    <property type="match status" value="1"/>
</dbReference>
<dbReference type="PROSITE" id="PS00217">
    <property type="entry name" value="SUGAR_TRANSPORT_2"/>
    <property type="match status" value="1"/>
</dbReference>
<reference key="1">
    <citation type="journal article" date="2008" name="PLoS Genet.">
        <title>Genomic islands in the pathogenic filamentous fungus Aspergillus fumigatus.</title>
        <authorList>
            <person name="Fedorova N.D."/>
            <person name="Khaldi N."/>
            <person name="Joardar V.S."/>
            <person name="Maiti R."/>
            <person name="Amedeo P."/>
            <person name="Anderson M.J."/>
            <person name="Crabtree J."/>
            <person name="Silva J.C."/>
            <person name="Badger J.H."/>
            <person name="Albarraq A."/>
            <person name="Angiuoli S."/>
            <person name="Bussey H."/>
            <person name="Bowyer P."/>
            <person name="Cotty P.J."/>
            <person name="Dyer P.S."/>
            <person name="Egan A."/>
            <person name="Galens K."/>
            <person name="Fraser-Liggett C.M."/>
            <person name="Haas B.J."/>
            <person name="Inman J.M."/>
            <person name="Kent R."/>
            <person name="Lemieux S."/>
            <person name="Malavazi I."/>
            <person name="Orvis J."/>
            <person name="Roemer T."/>
            <person name="Ronning C.M."/>
            <person name="Sundaram J.P."/>
            <person name="Sutton G."/>
            <person name="Turner G."/>
            <person name="Venter J.C."/>
            <person name="White O.R."/>
            <person name="Whitty B.R."/>
            <person name="Youngman P."/>
            <person name="Wolfe K.H."/>
            <person name="Goldman G.H."/>
            <person name="Wortman J.R."/>
            <person name="Jiang B."/>
            <person name="Denning D.W."/>
            <person name="Nierman W.C."/>
        </authorList>
    </citation>
    <scope>NUCLEOTIDE SEQUENCE [LARGE SCALE GENOMIC DNA]</scope>
    <source>
        <strain>CBS 144.89 / FGSC A1163 / CEA10</strain>
    </source>
</reference>
<organism>
    <name type="scientific">Aspergillus fumigatus (strain CBS 144.89 / FGSC A1163 / CEA10)</name>
    <name type="common">Neosartorya fumigata</name>
    <dbReference type="NCBI Taxonomy" id="451804"/>
    <lineage>
        <taxon>Eukaryota</taxon>
        <taxon>Fungi</taxon>
        <taxon>Dikarya</taxon>
        <taxon>Ascomycota</taxon>
        <taxon>Pezizomycotina</taxon>
        <taxon>Eurotiomycetes</taxon>
        <taxon>Eurotiomycetidae</taxon>
        <taxon>Eurotiales</taxon>
        <taxon>Aspergillaceae</taxon>
        <taxon>Aspergillus</taxon>
        <taxon>Aspergillus subgen. Fumigati</taxon>
    </lineage>
</organism>
<name>QUTD_ASPFC</name>
<proteinExistence type="inferred from homology"/>